<name>CSTN1_RAT</name>
<evidence type="ECO:0000250" key="1"/>
<evidence type="ECO:0000250" key="2">
    <source>
        <dbReference type="UniProtKB" id="O94985"/>
    </source>
</evidence>
<evidence type="ECO:0000250" key="3">
    <source>
        <dbReference type="UniProtKB" id="Q99JH7"/>
    </source>
</evidence>
<evidence type="ECO:0000250" key="4">
    <source>
        <dbReference type="UniProtKB" id="Q9EPL2"/>
    </source>
</evidence>
<evidence type="ECO:0000255" key="5"/>
<evidence type="ECO:0000255" key="6">
    <source>
        <dbReference type="PROSITE-ProRule" id="PRU00043"/>
    </source>
</evidence>
<evidence type="ECO:0000256" key="7">
    <source>
        <dbReference type="SAM" id="MobiDB-lite"/>
    </source>
</evidence>
<evidence type="ECO:0000269" key="8">
    <source>
    </source>
</evidence>
<evidence type="ECO:0000269" key="9">
    <source>
    </source>
</evidence>
<evidence type="ECO:0000269" key="10">
    <source>
    </source>
</evidence>
<evidence type="ECO:0000303" key="11">
    <source>
    </source>
</evidence>
<evidence type="ECO:0000305" key="12"/>
<organism>
    <name type="scientific">Rattus norvegicus</name>
    <name type="common">Rat</name>
    <dbReference type="NCBI Taxonomy" id="10116"/>
    <lineage>
        <taxon>Eukaryota</taxon>
        <taxon>Metazoa</taxon>
        <taxon>Chordata</taxon>
        <taxon>Craniata</taxon>
        <taxon>Vertebrata</taxon>
        <taxon>Euteleostomi</taxon>
        <taxon>Mammalia</taxon>
        <taxon>Eutheria</taxon>
        <taxon>Euarchontoglires</taxon>
        <taxon>Glires</taxon>
        <taxon>Rodentia</taxon>
        <taxon>Myomorpha</taxon>
        <taxon>Muroidea</taxon>
        <taxon>Muridae</taxon>
        <taxon>Murinae</taxon>
        <taxon>Rattus</taxon>
    </lineage>
</organism>
<accession>Q6Q0N0</accession>
<gene>
    <name type="primary">Clstn1</name>
    <name type="synonym">Cs1</name>
</gene>
<keyword id="KW-0106">Calcium</keyword>
<keyword id="KW-0130">Cell adhesion</keyword>
<keyword id="KW-1003">Cell membrane</keyword>
<keyword id="KW-0966">Cell projection</keyword>
<keyword id="KW-0256">Endoplasmic reticulum</keyword>
<keyword id="KW-0325">Glycoprotein</keyword>
<keyword id="KW-0333">Golgi apparatus</keyword>
<keyword id="KW-0472">Membrane</keyword>
<keyword id="KW-0539">Nucleus</keyword>
<keyword id="KW-0628">Postsynaptic cell membrane</keyword>
<keyword id="KW-1185">Reference proteome</keyword>
<keyword id="KW-0677">Repeat</keyword>
<keyword id="KW-0732">Signal</keyword>
<keyword id="KW-0770">Synapse</keyword>
<keyword id="KW-0812">Transmembrane</keyword>
<keyword id="KW-1133">Transmembrane helix</keyword>
<proteinExistence type="evidence at protein level"/>
<feature type="signal peptide" evidence="1">
    <location>
        <begin position="1"/>
        <end position="28"/>
    </location>
</feature>
<feature type="chain" id="PRO_0000323601" description="Calsyntenin-1">
    <location>
        <begin position="29"/>
        <end position="952"/>
    </location>
</feature>
<feature type="chain" id="PRO_0000323602" description="Soluble Alc-alpha" evidence="1">
    <location>
        <begin position="29"/>
        <end position="796"/>
    </location>
</feature>
<feature type="chain" id="PRO_0000323603" description="CTF1-alpha" evidence="1">
    <location>
        <begin position="797"/>
        <end position="952"/>
    </location>
</feature>
<feature type="topological domain" description="Extracellular" evidence="5">
    <location>
        <begin position="29"/>
        <end position="830"/>
    </location>
</feature>
<feature type="transmembrane region" description="Helical" evidence="5">
    <location>
        <begin position="831"/>
        <end position="851"/>
    </location>
</feature>
<feature type="topological domain" description="Cytoplasmic" evidence="5">
    <location>
        <begin position="852"/>
        <end position="952"/>
    </location>
</feature>
<feature type="domain" description="Cadherin 1" evidence="6">
    <location>
        <begin position="38"/>
        <end position="154"/>
    </location>
</feature>
<feature type="domain" description="Cadherin 2" evidence="6">
    <location>
        <begin position="155"/>
        <end position="255"/>
    </location>
</feature>
<feature type="region of interest" description="Disordered" evidence="7">
    <location>
        <begin position="886"/>
        <end position="952"/>
    </location>
</feature>
<feature type="compositionally biased region" description="Acidic residues" evidence="7">
    <location>
        <begin position="896"/>
        <end position="930"/>
    </location>
</feature>
<feature type="compositionally biased region" description="Polar residues" evidence="7">
    <location>
        <begin position="934"/>
        <end position="952"/>
    </location>
</feature>
<feature type="site" description="Cleavage" evidence="10">
    <location>
        <begin position="795"/>
        <end position="796"/>
    </location>
</feature>
<feature type="site" description="Cleavage" evidence="10">
    <location>
        <begin position="824"/>
        <end position="825"/>
    </location>
</feature>
<feature type="glycosylation site" description="N-linked (GlcNAc...) asparagine" evidence="5">
    <location>
        <position position="356"/>
    </location>
</feature>
<sequence length="952" mass="106261">MLRRPAPALARAVRLLLAGLLYGGGVWAARVNKHKPWLEPTYHGIVTENDNTVLLDPPLIALDKDSPLRFAGEICGFKIHGQNVPFDAVVVDKSTGEGIIRSKEKLDCELQKDYTFTIQAYDCGKGPDGTGVKKSHKATVHIQVNDVNEYAPVFKEKSYKAAVVEGKQHGSILRVEAVDADCSPQFSQICSYEILTPDVPFTVDKDGYIKNTEKLNYGKEHQYKLTVTAYDCGKKRATEDVLVKISVKPTCSPGWQGWSSRIEYEPGTGALAVFPSIHLETCDEPVASVQATVELETSHIGKGCDRDTYSEKSLHRLCGAAAGTSELLPSPSSSFNWTVGLPTDNGHDSDQVFEFNGTQAVRIPDGVVTLDPKEPFTISVWMRHGPFGRKKETILCSSDKTDMNRHHYSLYVHGCRLIFLLRQDPSEEKKYRPAEFHWKLNQVCDEDWHHFVLNVEVPSVTLYVDGVSHEPFSVTEDYPLHPTKIETQLVVGACWQGGDLHMTQFFRGNLAGLTVRSGKLADKKVIDCLYTCKEGLDLQVPEDGNRGVQIQTSSSQAVLTLEGENVGELDKAMQHISYLNSRQFPTPGIRRLKITSTVKCFNEAACIEVPPVEGYVMVLQPEEPKISLSGVHHFARAASEFESPEGVSLFPELKIISTITREVEPEADGAEDPTVQESLVSEEIVHDLDTCEVTVEGEELNAEQESLEVDVARLQQKGIEVNHSDLGVVFTGVETMASYEEVLHLLRYRNWHTRSLLDRKFKLICSELNGRYLSNEFKVEVNVIHTANPVEHANHMAAQPQFVHPEHRSFVDLSGHNLASPHPFAVVPSTATVVIVVCVSFLVFMIILGVFRIRAAHQRTMRDQDTGKENEMDWDDSALTITVNPMETYEDQHSSEEEEEEEEEEESEDGEEEEDITSAESESSEEEEGGPGDGQNTTRQQQLEWDYSTLSY</sequence>
<comment type="function">
    <text evidence="2 3 4">Postsynaptic adhesion molecule that binds to presynaptic neurexins to mediate both excitatory and inhibitory synapse formation (By similarity). Promotes synapse development by acting as a cell adhesion molecule at the postsynaptic membrane, which associates with neurexin-alpha at the presynaptic membrane (By similarity). Also functions as a cargo in axonal anterograde transport by acting as a molecular adapter that promotes KLC1 association with vesicles. Complex formation with APBA2 and APP, stabilizes APP metabolism and enhances APBA2-mediated suppression of beta-APP40 secretion, due to the retardation of intracellular APP maturation (By similarity).</text>
</comment>
<comment type="function">
    <molecule>Soluble Alc-alpha</molecule>
    <text evidence="2">As intracellular fragment AlcICD, suppresses APBB1-dependent transactivation stimulated by APP C-terminal intracellular fragment (AICD), most probably by competing with AICD for APBB1-binding.</text>
</comment>
<comment type="function">
    <molecule>CTF1-alpha</molecule>
    <text evidence="2">In complex with APBA2 and C99, a C-terminal APP fragment, abolishes C99 interaction with PSEN1 and thus APP C99 cleavage by gamma-secretase, most probably through stabilization of the direct interaction between APBA2 and APP.</text>
</comment>
<comment type="subunit">
    <text evidence="2 4">Directly interacts with APBA2 (By similarity). Forms a tripartite complex with APBA2 and APP (By similarity). Interacts with KLC1 (By similarity).</text>
</comment>
<comment type="subunit">
    <molecule>Soluble Alc-alpha</molecule>
    <text evidence="2">Interacts with APBB1; this interaction stabilizes AlcICD metabolism.</text>
</comment>
<comment type="subunit">
    <molecule>CTF1-alpha</molecule>
    <text evidence="2">Interacts with PSEN1.</text>
</comment>
<comment type="subcellular location">
    <subcellularLocation>
        <location evidence="8">Postsynaptic cell membrane</location>
        <topology evidence="5">Single-pass type I membrane protein</topology>
    </subcellularLocation>
    <subcellularLocation>
        <location evidence="2">Endoplasmic reticulum membrane</location>
        <topology evidence="5">Single-pass type I membrane protein</topology>
    </subcellularLocation>
    <subcellularLocation>
        <location evidence="2">Golgi apparatus membrane</location>
        <topology evidence="5">Single-pass type I membrane protein</topology>
    </subcellularLocation>
    <subcellularLocation>
        <location evidence="2">Cell projection</location>
        <location evidence="2">Neuron projection</location>
    </subcellularLocation>
    <text evidence="4">Localized in the postsynaptic membrane of both excitatory and inhibitory synapses.</text>
</comment>
<comment type="subcellular location">
    <molecule>Soluble Alc-alpha</molecule>
    <subcellularLocation>
        <location evidence="2">Nucleus</location>
    </subcellularLocation>
    <text evidence="2">The AlcICD fragment is translocated to the nucleus upon interaction with APBB1.</text>
</comment>
<comment type="tissue specificity">
    <text evidence="9">Preferentially expressed in the retina and brain.</text>
</comment>
<comment type="domain">
    <text evidence="4">The cytoplasmic domain binds synaptic Ca(2+).</text>
</comment>
<comment type="PTM">
    <text evidence="2">Proteolytically processed under normal cellular conditions. A primary zeta-cleavage generates a large extracellular (soluble) N-terminal domain (sAlc) and a short C-terminal transmembrane fragment (CTF1). A secondary cleavage catalyzed by presenilin gamma-secretase within the transmembrane domain releases the beta-Alc-alpha chain in the extracellular milieu and produces an intracellular fragment (AlcICD). This processing is strongly suppressed in the tripartite complex formed with APBA2 and APP, which seems to prevent the association with PSEN1.</text>
</comment>
<comment type="similarity">
    <text evidence="12">Belongs to the calsyntenin family.</text>
</comment>
<reference key="1">
    <citation type="journal article" date="2004" name="Invest. Ophthalmol. Vis. Sci.">
        <title>Gene expression profile of the rat eye iridocorneal angle: NEIBank expressed sequence tag analysis.</title>
        <authorList>
            <person name="Ahmed F."/>
            <person name="Torrado M."/>
            <person name="Zinovieva R.D."/>
            <person name="Senatorov V.V."/>
            <person name="Wistow G."/>
            <person name="Tomarev S.I."/>
        </authorList>
    </citation>
    <scope>NUCLEOTIDE SEQUENCE [MRNA]</scope>
    <scope>TISSUE SPECIFICITY</scope>
    <source>
        <strain>Wistar</strain>
        <tissue>Eye</tissue>
    </source>
</reference>
<reference key="2">
    <citation type="journal article" date="2015" name="J. Proteome Res.">
        <title>Peptidomics for studying limited proteolysis.</title>
        <authorList>
            <person name="Tsuchiya T."/>
            <person name="Osaki T."/>
            <person name="Minamino N."/>
            <person name="Sasaki K."/>
        </authorList>
    </citation>
    <scope>CLEAVAGE AFTER HIS-795</scope>
    <scope>CLEAVAGE AFTER PHE-824</scope>
    <scope>IDENTIFICATION BY MASS SPECTROMETRY</scope>
</reference>
<reference key="3">
    <citation type="journal article" date="2001" name="Mol. Cell. Neurosci.">
        <title>Calsyntenin-1, a proteolytically processed postsynaptic membrane protein with a cytoplasmic calcium-binding domain.</title>
        <authorList>
            <person name="Vogt L."/>
            <person name="Schrimpf S.P."/>
            <person name="Meskenaite V."/>
            <person name="Frischknecht R."/>
            <person name="Kinter J."/>
            <person name="Leone D.P."/>
            <person name="Ziegler U."/>
            <person name="Sonderegger P."/>
        </authorList>
    </citation>
    <scope>SUBCELLULAR LOCATION</scope>
</reference>
<protein>
    <recommendedName>
        <fullName evidence="11">Calsyntenin-1</fullName>
    </recommendedName>
    <component>
        <recommendedName>
            <fullName evidence="2">Soluble Alc-alpha</fullName>
            <shortName evidence="2">SAlc-alpha</shortName>
        </recommendedName>
    </component>
    <component>
        <recommendedName>
            <fullName evidence="2">CTF1-alpha</fullName>
        </recommendedName>
        <alternativeName>
            <fullName evidence="2">C-terminal fragment 1-alpha</fullName>
        </alternativeName>
    </component>
</protein>
<dbReference type="EMBL" id="AY569014">
    <property type="protein sequence ID" value="AAS75317.1"/>
    <property type="molecule type" value="mRNA"/>
</dbReference>
<dbReference type="RefSeq" id="NP_001007093.1">
    <property type="nucleotide sequence ID" value="NM_001007092.1"/>
</dbReference>
<dbReference type="SMR" id="Q6Q0N0"/>
<dbReference type="FunCoup" id="Q6Q0N0">
    <property type="interactions" value="2518"/>
</dbReference>
<dbReference type="STRING" id="10116.ENSRNOP00000047223"/>
<dbReference type="GlyCosmos" id="Q6Q0N0">
    <property type="glycosylation" value="1 site, No reported glycans"/>
</dbReference>
<dbReference type="GlyGen" id="Q6Q0N0">
    <property type="glycosylation" value="2 sites"/>
</dbReference>
<dbReference type="iPTMnet" id="Q6Q0N0"/>
<dbReference type="PhosphoSitePlus" id="Q6Q0N0"/>
<dbReference type="PaxDb" id="10116-ENSRNOP00000047223"/>
<dbReference type="GeneID" id="313717"/>
<dbReference type="KEGG" id="rno:313717"/>
<dbReference type="UCSC" id="RGD:1306458">
    <property type="organism name" value="rat"/>
</dbReference>
<dbReference type="AGR" id="RGD:1306458"/>
<dbReference type="CTD" id="22883"/>
<dbReference type="RGD" id="1306458">
    <property type="gene designation" value="Clstn1"/>
</dbReference>
<dbReference type="VEuPathDB" id="HostDB:ENSRNOG00000016398"/>
<dbReference type="eggNOG" id="KOG1834">
    <property type="taxonomic scope" value="Eukaryota"/>
</dbReference>
<dbReference type="HOGENOM" id="CLU_008904_0_0_1"/>
<dbReference type="InParanoid" id="Q6Q0N0"/>
<dbReference type="PRO" id="PR:Q6Q0N0"/>
<dbReference type="Proteomes" id="UP000002494">
    <property type="component" value="Chromosome 5"/>
</dbReference>
<dbReference type="Bgee" id="ENSRNOG00000016398">
    <property type="expression patterns" value="Expressed in Ammon's horn and 19 other cell types or tissues"/>
</dbReference>
<dbReference type="GO" id="GO:0009986">
    <property type="term" value="C:cell surface"/>
    <property type="evidence" value="ECO:0000266"/>
    <property type="project" value="RGD"/>
</dbReference>
<dbReference type="GO" id="GO:0005789">
    <property type="term" value="C:endoplasmic reticulum membrane"/>
    <property type="evidence" value="ECO:0007669"/>
    <property type="project" value="UniProtKB-SubCell"/>
</dbReference>
<dbReference type="GO" id="GO:0005576">
    <property type="term" value="C:extracellular region"/>
    <property type="evidence" value="ECO:0000266"/>
    <property type="project" value="RGD"/>
</dbReference>
<dbReference type="GO" id="GO:0098982">
    <property type="term" value="C:GABA-ergic synapse"/>
    <property type="evidence" value="ECO:0000314"/>
    <property type="project" value="SynGO"/>
</dbReference>
<dbReference type="GO" id="GO:0098978">
    <property type="term" value="C:glutamatergic synapse"/>
    <property type="evidence" value="ECO:0000314"/>
    <property type="project" value="SynGO"/>
</dbReference>
<dbReference type="GO" id="GO:0000139">
    <property type="term" value="C:Golgi membrane"/>
    <property type="evidence" value="ECO:0007669"/>
    <property type="project" value="UniProtKB-SubCell"/>
</dbReference>
<dbReference type="GO" id="GO:0016020">
    <property type="term" value="C:membrane"/>
    <property type="evidence" value="ECO:0000266"/>
    <property type="project" value="RGD"/>
</dbReference>
<dbReference type="GO" id="GO:0005634">
    <property type="term" value="C:nucleus"/>
    <property type="evidence" value="ECO:0007669"/>
    <property type="project" value="UniProtKB-SubCell"/>
</dbReference>
<dbReference type="GO" id="GO:0014069">
    <property type="term" value="C:postsynaptic density"/>
    <property type="evidence" value="ECO:0000266"/>
    <property type="project" value="RGD"/>
</dbReference>
<dbReference type="GO" id="GO:0098839">
    <property type="term" value="C:postsynaptic density membrane"/>
    <property type="evidence" value="ECO:0000314"/>
    <property type="project" value="SynGO"/>
</dbReference>
<dbReference type="GO" id="GO:0098845">
    <property type="term" value="C:postsynaptic endosome"/>
    <property type="evidence" value="ECO:0000266"/>
    <property type="project" value="RGD"/>
</dbReference>
<dbReference type="GO" id="GO:0045211">
    <property type="term" value="C:postsynaptic membrane"/>
    <property type="evidence" value="ECO:0000266"/>
    <property type="project" value="RGD"/>
</dbReference>
<dbReference type="GO" id="GO:0098897">
    <property type="term" value="C:spine apparatus membrane"/>
    <property type="evidence" value="ECO:0000314"/>
    <property type="project" value="SynGO"/>
</dbReference>
<dbReference type="GO" id="GO:0001540">
    <property type="term" value="F:amyloid-beta binding"/>
    <property type="evidence" value="ECO:0000266"/>
    <property type="project" value="RGD"/>
</dbReference>
<dbReference type="GO" id="GO:0005509">
    <property type="term" value="F:calcium ion binding"/>
    <property type="evidence" value="ECO:0007669"/>
    <property type="project" value="InterPro"/>
</dbReference>
<dbReference type="GO" id="GO:0019894">
    <property type="term" value="F:kinesin binding"/>
    <property type="evidence" value="ECO:0000266"/>
    <property type="project" value="RGD"/>
</dbReference>
<dbReference type="GO" id="GO:0042988">
    <property type="term" value="F:X11-like protein binding"/>
    <property type="evidence" value="ECO:0000266"/>
    <property type="project" value="RGD"/>
</dbReference>
<dbReference type="GO" id="GO:0007156">
    <property type="term" value="P:homophilic cell adhesion via plasma membrane adhesion molecules"/>
    <property type="evidence" value="ECO:0007669"/>
    <property type="project" value="InterPro"/>
</dbReference>
<dbReference type="GO" id="GO:0098969">
    <property type="term" value="P:neurotransmitter receptor transport to postsynaptic membrane"/>
    <property type="evidence" value="ECO:0000266"/>
    <property type="project" value="RGD"/>
</dbReference>
<dbReference type="GO" id="GO:0051965">
    <property type="term" value="P:positive regulation of synapse assembly"/>
    <property type="evidence" value="ECO:0000266"/>
    <property type="project" value="RGD"/>
</dbReference>
<dbReference type="GO" id="GO:0050806">
    <property type="term" value="P:positive regulation of synaptic transmission"/>
    <property type="evidence" value="ECO:0000266"/>
    <property type="project" value="RGD"/>
</dbReference>
<dbReference type="GO" id="GO:0001558">
    <property type="term" value="P:regulation of cell growth"/>
    <property type="evidence" value="ECO:0000266"/>
    <property type="project" value="RGD"/>
</dbReference>
<dbReference type="GO" id="GO:0090128">
    <property type="term" value="P:regulation of synapse maturation"/>
    <property type="evidence" value="ECO:0000266"/>
    <property type="project" value="RGD"/>
</dbReference>
<dbReference type="GO" id="GO:0099003">
    <property type="term" value="P:vesicle-mediated transport in synapse"/>
    <property type="evidence" value="ECO:0000266"/>
    <property type="project" value="RGD"/>
</dbReference>
<dbReference type="CDD" id="cd11304">
    <property type="entry name" value="Cadherin_repeat"/>
    <property type="match status" value="2"/>
</dbReference>
<dbReference type="FunFam" id="2.60.120.200:FF:000036">
    <property type="entry name" value="Calsyntenin 1"/>
    <property type="match status" value="1"/>
</dbReference>
<dbReference type="FunFam" id="2.60.40.60:FF:000025">
    <property type="entry name" value="Calsyntenin 1"/>
    <property type="match status" value="1"/>
</dbReference>
<dbReference type="FunFam" id="2.60.40.60:FF:000062">
    <property type="entry name" value="Calsyntenin 3"/>
    <property type="match status" value="1"/>
</dbReference>
<dbReference type="Gene3D" id="2.60.120.200">
    <property type="match status" value="1"/>
</dbReference>
<dbReference type="Gene3D" id="2.60.40.60">
    <property type="entry name" value="Cadherins"/>
    <property type="match status" value="2"/>
</dbReference>
<dbReference type="InterPro" id="IPR002126">
    <property type="entry name" value="Cadherin-like_dom"/>
</dbReference>
<dbReference type="InterPro" id="IPR015919">
    <property type="entry name" value="Cadherin-like_sf"/>
</dbReference>
<dbReference type="InterPro" id="IPR045588">
    <property type="entry name" value="CLSTN_C"/>
</dbReference>
<dbReference type="InterPro" id="IPR013320">
    <property type="entry name" value="ConA-like_dom_sf"/>
</dbReference>
<dbReference type="PANTHER" id="PTHR14139">
    <property type="entry name" value="CALSYNTENIN"/>
    <property type="match status" value="1"/>
</dbReference>
<dbReference type="PANTHER" id="PTHR14139:SF4">
    <property type="entry name" value="CALSYNTENIN-1"/>
    <property type="match status" value="1"/>
</dbReference>
<dbReference type="Pfam" id="PF00028">
    <property type="entry name" value="Cadherin"/>
    <property type="match status" value="1"/>
</dbReference>
<dbReference type="Pfam" id="PF19699">
    <property type="entry name" value="CLSTN_C"/>
    <property type="match status" value="1"/>
</dbReference>
<dbReference type="Pfam" id="PF13385">
    <property type="entry name" value="Laminin_G_3"/>
    <property type="match status" value="1"/>
</dbReference>
<dbReference type="PRINTS" id="PR00205">
    <property type="entry name" value="CADHERIN"/>
</dbReference>
<dbReference type="SMART" id="SM00112">
    <property type="entry name" value="CA"/>
    <property type="match status" value="2"/>
</dbReference>
<dbReference type="SUPFAM" id="SSF49313">
    <property type="entry name" value="Cadherin-like"/>
    <property type="match status" value="2"/>
</dbReference>
<dbReference type="SUPFAM" id="SSF49899">
    <property type="entry name" value="Concanavalin A-like lectins/glucanases"/>
    <property type="match status" value="1"/>
</dbReference>
<dbReference type="PROSITE" id="PS50268">
    <property type="entry name" value="CADHERIN_2"/>
    <property type="match status" value="2"/>
</dbReference>